<accession>B9JEY4</accession>
<feature type="chain" id="PRO_1000116591" description="LexA repressor">
    <location>
        <begin position="1"/>
        <end position="240"/>
    </location>
</feature>
<feature type="DNA-binding region" description="H-T-H motif" evidence="1">
    <location>
        <begin position="26"/>
        <end position="46"/>
    </location>
</feature>
<feature type="region of interest" description="Disordered" evidence="2">
    <location>
        <begin position="78"/>
        <end position="113"/>
    </location>
</feature>
<feature type="active site" description="For autocatalytic cleavage activity" evidence="1">
    <location>
        <position position="160"/>
    </location>
</feature>
<feature type="active site" description="For autocatalytic cleavage activity" evidence="1">
    <location>
        <position position="198"/>
    </location>
</feature>
<feature type="site" description="Cleavage; by autolysis" evidence="1">
    <location>
        <begin position="125"/>
        <end position="126"/>
    </location>
</feature>
<evidence type="ECO:0000255" key="1">
    <source>
        <dbReference type="HAMAP-Rule" id="MF_00015"/>
    </source>
</evidence>
<evidence type="ECO:0000256" key="2">
    <source>
        <dbReference type="SAM" id="MobiDB-lite"/>
    </source>
</evidence>
<organism>
    <name type="scientific">Rhizobium rhizogenes (strain K84 / ATCC BAA-868)</name>
    <name type="common">Agrobacterium radiobacter</name>
    <dbReference type="NCBI Taxonomy" id="311403"/>
    <lineage>
        <taxon>Bacteria</taxon>
        <taxon>Pseudomonadati</taxon>
        <taxon>Pseudomonadota</taxon>
        <taxon>Alphaproteobacteria</taxon>
        <taxon>Hyphomicrobiales</taxon>
        <taxon>Rhizobiaceae</taxon>
        <taxon>Rhizobium/Agrobacterium group</taxon>
        <taxon>Rhizobium</taxon>
    </lineage>
</organism>
<comment type="function">
    <text evidence="1">Represses a number of genes involved in the response to DNA damage (SOS response), including recA and lexA. In the presence of single-stranded DNA, RecA interacts with LexA causing an autocatalytic cleavage which disrupts the DNA-binding part of LexA, leading to derepression of the SOS regulon and eventually DNA repair.</text>
</comment>
<comment type="catalytic activity">
    <reaction evidence="1">
        <text>Hydrolysis of Ala-|-Gly bond in repressor LexA.</text>
        <dbReference type="EC" id="3.4.21.88"/>
    </reaction>
</comment>
<comment type="subunit">
    <text evidence="1">Homodimer.</text>
</comment>
<comment type="similarity">
    <text evidence="1">Belongs to the peptidase S24 family.</text>
</comment>
<proteinExistence type="inferred from homology"/>
<name>LEXA_RHIR8</name>
<dbReference type="EC" id="3.4.21.88" evidence="1"/>
<dbReference type="EMBL" id="CP000628">
    <property type="protein sequence ID" value="ACM26475.1"/>
    <property type="molecule type" value="Genomic_DNA"/>
</dbReference>
<dbReference type="RefSeq" id="WP_007693442.1">
    <property type="nucleotide sequence ID" value="NC_011985.1"/>
</dbReference>
<dbReference type="SMR" id="B9JEY4"/>
<dbReference type="STRING" id="311403.Arad_2240"/>
<dbReference type="MEROPS" id="S24.001"/>
<dbReference type="GeneID" id="86848369"/>
<dbReference type="KEGG" id="ara:Arad_2240"/>
<dbReference type="eggNOG" id="COG1974">
    <property type="taxonomic scope" value="Bacteria"/>
</dbReference>
<dbReference type="HOGENOM" id="CLU_066192_45_2_5"/>
<dbReference type="Proteomes" id="UP000001600">
    <property type="component" value="Chromosome 1"/>
</dbReference>
<dbReference type="GO" id="GO:0003677">
    <property type="term" value="F:DNA binding"/>
    <property type="evidence" value="ECO:0007669"/>
    <property type="project" value="UniProtKB-UniRule"/>
</dbReference>
<dbReference type="GO" id="GO:0004252">
    <property type="term" value="F:serine-type endopeptidase activity"/>
    <property type="evidence" value="ECO:0007669"/>
    <property type="project" value="UniProtKB-UniRule"/>
</dbReference>
<dbReference type="GO" id="GO:0006281">
    <property type="term" value="P:DNA repair"/>
    <property type="evidence" value="ECO:0007669"/>
    <property type="project" value="UniProtKB-UniRule"/>
</dbReference>
<dbReference type="GO" id="GO:0006260">
    <property type="term" value="P:DNA replication"/>
    <property type="evidence" value="ECO:0007669"/>
    <property type="project" value="UniProtKB-UniRule"/>
</dbReference>
<dbReference type="GO" id="GO:0045892">
    <property type="term" value="P:negative regulation of DNA-templated transcription"/>
    <property type="evidence" value="ECO:0007669"/>
    <property type="project" value="UniProtKB-UniRule"/>
</dbReference>
<dbReference type="GO" id="GO:0006508">
    <property type="term" value="P:proteolysis"/>
    <property type="evidence" value="ECO:0007669"/>
    <property type="project" value="InterPro"/>
</dbReference>
<dbReference type="GO" id="GO:0009432">
    <property type="term" value="P:SOS response"/>
    <property type="evidence" value="ECO:0007669"/>
    <property type="project" value="UniProtKB-UniRule"/>
</dbReference>
<dbReference type="CDD" id="cd06529">
    <property type="entry name" value="S24_LexA-like"/>
    <property type="match status" value="1"/>
</dbReference>
<dbReference type="FunFam" id="1.10.10.10:FF:000102">
    <property type="entry name" value="LexA repressor"/>
    <property type="match status" value="1"/>
</dbReference>
<dbReference type="FunFam" id="2.10.109.10:FF:000001">
    <property type="entry name" value="LexA repressor"/>
    <property type="match status" value="1"/>
</dbReference>
<dbReference type="Gene3D" id="2.10.109.10">
    <property type="entry name" value="Umud Fragment, subunit A"/>
    <property type="match status" value="1"/>
</dbReference>
<dbReference type="Gene3D" id="1.10.10.10">
    <property type="entry name" value="Winged helix-like DNA-binding domain superfamily/Winged helix DNA-binding domain"/>
    <property type="match status" value="1"/>
</dbReference>
<dbReference type="HAMAP" id="MF_00015">
    <property type="entry name" value="LexA"/>
    <property type="match status" value="1"/>
</dbReference>
<dbReference type="InterPro" id="IPR006200">
    <property type="entry name" value="LexA"/>
</dbReference>
<dbReference type="InterPro" id="IPR039418">
    <property type="entry name" value="LexA-like"/>
</dbReference>
<dbReference type="InterPro" id="IPR036286">
    <property type="entry name" value="LexA/Signal_pep-like_sf"/>
</dbReference>
<dbReference type="InterPro" id="IPR006199">
    <property type="entry name" value="LexA_DNA-bd_dom"/>
</dbReference>
<dbReference type="InterPro" id="IPR050077">
    <property type="entry name" value="LexA_repressor"/>
</dbReference>
<dbReference type="InterPro" id="IPR006197">
    <property type="entry name" value="Peptidase_S24_LexA"/>
</dbReference>
<dbReference type="InterPro" id="IPR015927">
    <property type="entry name" value="Peptidase_S24_S26A/B/C"/>
</dbReference>
<dbReference type="InterPro" id="IPR036388">
    <property type="entry name" value="WH-like_DNA-bd_sf"/>
</dbReference>
<dbReference type="InterPro" id="IPR036390">
    <property type="entry name" value="WH_DNA-bd_sf"/>
</dbReference>
<dbReference type="NCBIfam" id="TIGR00498">
    <property type="entry name" value="lexA"/>
    <property type="match status" value="1"/>
</dbReference>
<dbReference type="PANTHER" id="PTHR33516">
    <property type="entry name" value="LEXA REPRESSOR"/>
    <property type="match status" value="1"/>
</dbReference>
<dbReference type="PANTHER" id="PTHR33516:SF2">
    <property type="entry name" value="LEXA REPRESSOR-RELATED"/>
    <property type="match status" value="1"/>
</dbReference>
<dbReference type="Pfam" id="PF01726">
    <property type="entry name" value="LexA_DNA_bind"/>
    <property type="match status" value="1"/>
</dbReference>
<dbReference type="Pfam" id="PF00717">
    <property type="entry name" value="Peptidase_S24"/>
    <property type="match status" value="1"/>
</dbReference>
<dbReference type="PRINTS" id="PR00726">
    <property type="entry name" value="LEXASERPTASE"/>
</dbReference>
<dbReference type="SUPFAM" id="SSF51306">
    <property type="entry name" value="LexA/Signal peptidase"/>
    <property type="match status" value="1"/>
</dbReference>
<dbReference type="SUPFAM" id="SSF46785">
    <property type="entry name" value="Winged helix' DNA-binding domain"/>
    <property type="match status" value="1"/>
</dbReference>
<keyword id="KW-0068">Autocatalytic cleavage</keyword>
<keyword id="KW-0227">DNA damage</keyword>
<keyword id="KW-0234">DNA repair</keyword>
<keyword id="KW-0235">DNA replication</keyword>
<keyword id="KW-0238">DNA-binding</keyword>
<keyword id="KW-0378">Hydrolase</keyword>
<keyword id="KW-0678">Repressor</keyword>
<keyword id="KW-0742">SOS response</keyword>
<keyword id="KW-0804">Transcription</keyword>
<keyword id="KW-0805">Transcription regulation</keyword>
<reference key="1">
    <citation type="journal article" date="2009" name="J. Bacteriol.">
        <title>Genome sequences of three Agrobacterium biovars help elucidate the evolution of multichromosome genomes in bacteria.</title>
        <authorList>
            <person name="Slater S.C."/>
            <person name="Goldman B.S."/>
            <person name="Goodner B."/>
            <person name="Setubal J.C."/>
            <person name="Farrand S.K."/>
            <person name="Nester E.W."/>
            <person name="Burr T.J."/>
            <person name="Banta L."/>
            <person name="Dickerman A.W."/>
            <person name="Paulsen I."/>
            <person name="Otten L."/>
            <person name="Suen G."/>
            <person name="Welch R."/>
            <person name="Almeida N.F."/>
            <person name="Arnold F."/>
            <person name="Burton O.T."/>
            <person name="Du Z."/>
            <person name="Ewing A."/>
            <person name="Godsy E."/>
            <person name="Heisel S."/>
            <person name="Houmiel K.L."/>
            <person name="Jhaveri J."/>
            <person name="Lu J."/>
            <person name="Miller N.M."/>
            <person name="Norton S."/>
            <person name="Chen Q."/>
            <person name="Phoolcharoen W."/>
            <person name="Ohlin V."/>
            <person name="Ondrusek D."/>
            <person name="Pride N."/>
            <person name="Stricklin S.L."/>
            <person name="Sun J."/>
            <person name="Wheeler C."/>
            <person name="Wilson L."/>
            <person name="Zhu H."/>
            <person name="Wood D.W."/>
        </authorList>
    </citation>
    <scope>NUCLEOTIDE SEQUENCE [LARGE SCALE GENOMIC DNA]</scope>
    <source>
        <strain>K84 / ATCC BAA-868</strain>
    </source>
</reference>
<gene>
    <name evidence="1" type="primary">lexA</name>
    <name type="ordered locus">Arad_2240</name>
</gene>
<sequence length="240" mass="26147">MLTRKQQELLLFIHERMKESGVPPSFDEMKDALDLASKSGIHRLITALEERGFIRRLPNRARALEVIKLPEAYSPSLQPRRGFSPSVIEGSLGKPQPVQPPAPAKPANDENNSAVSVPVMGRIAAGVPISAIQNNTHDITVPADMLGSGEHYALEVKGDSMIDAGIFDGDTVIIRNSTTANPGDIVVALVDDEEATLKRFRRKGASIALEAANPAYETRIFGPDRVKVQGKLVGLIRRYH</sequence>
<protein>
    <recommendedName>
        <fullName evidence="1">LexA repressor</fullName>
        <ecNumber evidence="1">3.4.21.88</ecNumber>
    </recommendedName>
</protein>